<sequence>MSNTASLKKEYAERIAPALKSQFQYSSTMQIPVLKKIVINQGLGMAVADKKIIEVAINEMTAITGQKAVATISRKDIANFKLRKKMPIGVMVTLRRERMYEFLEKLVRVALPRIRDFKGIETKFDGKGNYTLGIQEQIIFPEINIDSITRILGMNITFVTSAQTDEEGYALLKEFGLPFKNAKKD</sequence>
<protein>
    <recommendedName>
        <fullName evidence="1">Large ribosomal subunit protein uL5</fullName>
    </recommendedName>
    <alternativeName>
        <fullName evidence="2">50S ribosomal protein L5</fullName>
    </alternativeName>
</protein>
<evidence type="ECO:0000255" key="1">
    <source>
        <dbReference type="HAMAP-Rule" id="MF_01333"/>
    </source>
</evidence>
<evidence type="ECO:0000305" key="2"/>
<comment type="function">
    <text evidence="1">This is one of the proteins that bind and probably mediate the attachment of the 5S RNA into the large ribosomal subunit, where it forms part of the central protuberance. In the 70S ribosome it contacts protein S13 of the 30S subunit (bridge B1b), connecting the 2 subunits; this bridge is implicated in subunit movement. Contacts the P site tRNA; the 5S rRNA and some of its associated proteins might help stabilize positioning of ribosome-bound tRNAs.</text>
</comment>
<comment type="subunit">
    <text evidence="1">Part of the 50S ribosomal subunit; part of the 5S rRNA/L5/L18/L25 subcomplex. Contacts the 5S rRNA and the P site tRNA. Forms a bridge to the 30S subunit in the 70S ribosome.</text>
</comment>
<comment type="similarity">
    <text evidence="1">Belongs to the universal ribosomal protein uL5 family.</text>
</comment>
<name>RL5_BACFN</name>
<gene>
    <name evidence="1" type="primary">rplE</name>
    <name type="ordered locus">BF3991</name>
</gene>
<proteinExistence type="inferred from homology"/>
<organism>
    <name type="scientific">Bacteroides fragilis (strain ATCC 25285 / DSM 2151 / CCUG 4856 / JCM 11019 / LMG 10263 / NCTC 9343 / Onslow / VPI 2553 / EN-2)</name>
    <dbReference type="NCBI Taxonomy" id="272559"/>
    <lineage>
        <taxon>Bacteria</taxon>
        <taxon>Pseudomonadati</taxon>
        <taxon>Bacteroidota</taxon>
        <taxon>Bacteroidia</taxon>
        <taxon>Bacteroidales</taxon>
        <taxon>Bacteroidaceae</taxon>
        <taxon>Bacteroides</taxon>
    </lineage>
</organism>
<dbReference type="EMBL" id="CR626927">
    <property type="protein sequence ID" value="CAH09667.1"/>
    <property type="molecule type" value="Genomic_DNA"/>
</dbReference>
<dbReference type="RefSeq" id="WP_005791556.1">
    <property type="nucleotide sequence ID" value="NZ_UFTH01000001.1"/>
</dbReference>
<dbReference type="SMR" id="Q5L8C1"/>
<dbReference type="PaxDb" id="272559-BF9343_3886"/>
<dbReference type="GeneID" id="60367776"/>
<dbReference type="KEGG" id="bfs:BF9343_3886"/>
<dbReference type="eggNOG" id="COG0094">
    <property type="taxonomic scope" value="Bacteria"/>
</dbReference>
<dbReference type="HOGENOM" id="CLU_061015_2_1_10"/>
<dbReference type="Proteomes" id="UP000006731">
    <property type="component" value="Chromosome"/>
</dbReference>
<dbReference type="GO" id="GO:1990904">
    <property type="term" value="C:ribonucleoprotein complex"/>
    <property type="evidence" value="ECO:0007669"/>
    <property type="project" value="UniProtKB-KW"/>
</dbReference>
<dbReference type="GO" id="GO:0005840">
    <property type="term" value="C:ribosome"/>
    <property type="evidence" value="ECO:0007669"/>
    <property type="project" value="UniProtKB-KW"/>
</dbReference>
<dbReference type="GO" id="GO:0019843">
    <property type="term" value="F:rRNA binding"/>
    <property type="evidence" value="ECO:0007669"/>
    <property type="project" value="UniProtKB-UniRule"/>
</dbReference>
<dbReference type="GO" id="GO:0003735">
    <property type="term" value="F:structural constituent of ribosome"/>
    <property type="evidence" value="ECO:0007669"/>
    <property type="project" value="InterPro"/>
</dbReference>
<dbReference type="GO" id="GO:0000049">
    <property type="term" value="F:tRNA binding"/>
    <property type="evidence" value="ECO:0007669"/>
    <property type="project" value="UniProtKB-UniRule"/>
</dbReference>
<dbReference type="GO" id="GO:0006412">
    <property type="term" value="P:translation"/>
    <property type="evidence" value="ECO:0007669"/>
    <property type="project" value="UniProtKB-UniRule"/>
</dbReference>
<dbReference type="FunFam" id="3.30.1440.10:FF:000001">
    <property type="entry name" value="50S ribosomal protein L5"/>
    <property type="match status" value="1"/>
</dbReference>
<dbReference type="Gene3D" id="3.30.1440.10">
    <property type="match status" value="1"/>
</dbReference>
<dbReference type="HAMAP" id="MF_01333_B">
    <property type="entry name" value="Ribosomal_uL5_B"/>
    <property type="match status" value="1"/>
</dbReference>
<dbReference type="InterPro" id="IPR002132">
    <property type="entry name" value="Ribosomal_uL5"/>
</dbReference>
<dbReference type="InterPro" id="IPR020930">
    <property type="entry name" value="Ribosomal_uL5_bac-type"/>
</dbReference>
<dbReference type="InterPro" id="IPR031309">
    <property type="entry name" value="Ribosomal_uL5_C"/>
</dbReference>
<dbReference type="InterPro" id="IPR022803">
    <property type="entry name" value="Ribosomal_uL5_dom_sf"/>
</dbReference>
<dbReference type="InterPro" id="IPR031310">
    <property type="entry name" value="Ribosomal_uL5_N"/>
</dbReference>
<dbReference type="NCBIfam" id="NF000585">
    <property type="entry name" value="PRK00010.1"/>
    <property type="match status" value="1"/>
</dbReference>
<dbReference type="PANTHER" id="PTHR11994">
    <property type="entry name" value="60S RIBOSOMAL PROTEIN L11-RELATED"/>
    <property type="match status" value="1"/>
</dbReference>
<dbReference type="Pfam" id="PF00281">
    <property type="entry name" value="Ribosomal_L5"/>
    <property type="match status" value="1"/>
</dbReference>
<dbReference type="Pfam" id="PF00673">
    <property type="entry name" value="Ribosomal_L5_C"/>
    <property type="match status" value="1"/>
</dbReference>
<dbReference type="PIRSF" id="PIRSF002161">
    <property type="entry name" value="Ribosomal_L5"/>
    <property type="match status" value="1"/>
</dbReference>
<dbReference type="SUPFAM" id="SSF55282">
    <property type="entry name" value="RL5-like"/>
    <property type="match status" value="1"/>
</dbReference>
<feature type="chain" id="PRO_0000242970" description="Large ribosomal subunit protein uL5">
    <location>
        <begin position="1"/>
        <end position="185"/>
    </location>
</feature>
<reference key="1">
    <citation type="journal article" date="2005" name="Science">
        <title>Extensive DNA inversions in the B. fragilis genome control variable gene expression.</title>
        <authorList>
            <person name="Cerdeno-Tarraga A.-M."/>
            <person name="Patrick S."/>
            <person name="Crossman L.C."/>
            <person name="Blakely G."/>
            <person name="Abratt V."/>
            <person name="Lennard N."/>
            <person name="Poxton I."/>
            <person name="Duerden B."/>
            <person name="Harris B."/>
            <person name="Quail M.A."/>
            <person name="Barron A."/>
            <person name="Clark L."/>
            <person name="Corton C."/>
            <person name="Doggett J."/>
            <person name="Holden M.T.G."/>
            <person name="Larke N."/>
            <person name="Line A."/>
            <person name="Lord A."/>
            <person name="Norbertczak H."/>
            <person name="Ormond D."/>
            <person name="Price C."/>
            <person name="Rabbinowitsch E."/>
            <person name="Woodward J."/>
            <person name="Barrell B.G."/>
            <person name="Parkhill J."/>
        </authorList>
    </citation>
    <scope>NUCLEOTIDE SEQUENCE [LARGE SCALE GENOMIC DNA]</scope>
    <source>
        <strain>ATCC 25285 / DSM 2151 / CCUG 4856 / JCM 11019 / LMG 10263 / NCTC 9343 / Onslow / VPI 2553 / EN-2</strain>
    </source>
</reference>
<keyword id="KW-0687">Ribonucleoprotein</keyword>
<keyword id="KW-0689">Ribosomal protein</keyword>
<keyword id="KW-0694">RNA-binding</keyword>
<keyword id="KW-0699">rRNA-binding</keyword>
<keyword id="KW-0820">tRNA-binding</keyword>
<accession>Q5L8C1</accession>